<comment type="similarity">
    <text evidence="1">Belongs to the universal ribosomal protein uL23 family.</text>
</comment>
<evidence type="ECO:0000305" key="1"/>
<sequence length="142" mass="15716">MAPSTKATAAKKAVVKGTNGKKALKVRTSASFRLPKTLKLARSPKYATKAVPHYNRLDSYKVIEQPITSETAMKKVEDGNTLVFKVSLKANKYQIKKAVKELYEVDVLSVNTLVRPNGTKKAYVRLTADFDALDIANRIGYI</sequence>
<dbReference type="EMBL" id="S53176">
    <property type="protein sequence ID" value="AAB24896.1"/>
    <property type="molecule type" value="Genomic_DNA"/>
</dbReference>
<dbReference type="EMBL" id="CR382125">
    <property type="protein sequence ID" value="CAG99373.1"/>
    <property type="molecule type" value="Genomic_DNA"/>
</dbReference>
<dbReference type="PIR" id="S29999">
    <property type="entry name" value="S29999"/>
</dbReference>
<dbReference type="RefSeq" id="XP_454286.1">
    <property type="nucleotide sequence ID" value="XM_454286.1"/>
</dbReference>
<dbReference type="PDB" id="5IT7">
    <property type="method" value="EM"/>
    <property type="resolution" value="3.60 A"/>
    <property type="chains" value="XX=22-142"/>
</dbReference>
<dbReference type="PDB" id="6UZ7">
    <property type="method" value="EM"/>
    <property type="resolution" value="3.60 A"/>
    <property type="chains" value="AX=1-142"/>
</dbReference>
<dbReference type="PDBsum" id="5IT7"/>
<dbReference type="PDBsum" id="6UZ7"/>
<dbReference type="EMDB" id="EMD-20952"/>
<dbReference type="EMDB" id="EMD-8123"/>
<dbReference type="SMR" id="P48045"/>
<dbReference type="FunCoup" id="P48045">
    <property type="interactions" value="874"/>
</dbReference>
<dbReference type="STRING" id="284590.P48045"/>
<dbReference type="PaxDb" id="284590-P48045"/>
<dbReference type="KEGG" id="kla:KLLA0_E07481g"/>
<dbReference type="eggNOG" id="KOG1751">
    <property type="taxonomic scope" value="Eukaryota"/>
</dbReference>
<dbReference type="HOGENOM" id="CLU_037562_0_1_1"/>
<dbReference type="InParanoid" id="P48045"/>
<dbReference type="OMA" id="RLDHHKV"/>
<dbReference type="Proteomes" id="UP000000598">
    <property type="component" value="Chromosome E"/>
</dbReference>
<dbReference type="GO" id="GO:1990904">
    <property type="term" value="C:ribonucleoprotein complex"/>
    <property type="evidence" value="ECO:0007669"/>
    <property type="project" value="UniProtKB-KW"/>
</dbReference>
<dbReference type="GO" id="GO:0005840">
    <property type="term" value="C:ribosome"/>
    <property type="evidence" value="ECO:0007669"/>
    <property type="project" value="UniProtKB-KW"/>
</dbReference>
<dbReference type="GO" id="GO:0019843">
    <property type="term" value="F:rRNA binding"/>
    <property type="evidence" value="ECO:0007669"/>
    <property type="project" value="UniProtKB-KW"/>
</dbReference>
<dbReference type="GO" id="GO:0003735">
    <property type="term" value="F:structural constituent of ribosome"/>
    <property type="evidence" value="ECO:0007669"/>
    <property type="project" value="InterPro"/>
</dbReference>
<dbReference type="GO" id="GO:0006412">
    <property type="term" value="P:translation"/>
    <property type="evidence" value="ECO:0007669"/>
    <property type="project" value="InterPro"/>
</dbReference>
<dbReference type="FunFam" id="3.30.70.330:FF:000035">
    <property type="entry name" value="60S ribosomal protein L23a"/>
    <property type="match status" value="1"/>
</dbReference>
<dbReference type="Gene3D" id="3.30.70.330">
    <property type="match status" value="1"/>
</dbReference>
<dbReference type="HAMAP" id="MF_01369_A">
    <property type="entry name" value="Ribosomal_uL23_A"/>
    <property type="match status" value="1"/>
</dbReference>
<dbReference type="InterPro" id="IPR012677">
    <property type="entry name" value="Nucleotide-bd_a/b_plait_sf"/>
</dbReference>
<dbReference type="InterPro" id="IPR013025">
    <property type="entry name" value="Ribosomal_uL23-like"/>
</dbReference>
<dbReference type="InterPro" id="IPR012678">
    <property type="entry name" value="Ribosomal_uL23/eL15/eS24_sf"/>
</dbReference>
<dbReference type="InterPro" id="IPR001014">
    <property type="entry name" value="Ribosomal_uL23_CS"/>
</dbReference>
<dbReference type="InterPro" id="IPR005633">
    <property type="entry name" value="Ribosomal_uL23_N"/>
</dbReference>
<dbReference type="NCBIfam" id="NF011118">
    <property type="entry name" value="PRK14548.1"/>
    <property type="match status" value="1"/>
</dbReference>
<dbReference type="PANTHER" id="PTHR11620">
    <property type="entry name" value="60S RIBOSOMAL PROTEIN L23A"/>
    <property type="match status" value="1"/>
</dbReference>
<dbReference type="Pfam" id="PF00276">
    <property type="entry name" value="Ribosomal_L23"/>
    <property type="match status" value="1"/>
</dbReference>
<dbReference type="Pfam" id="PF03939">
    <property type="entry name" value="Ribosomal_L23eN"/>
    <property type="match status" value="1"/>
</dbReference>
<dbReference type="SUPFAM" id="SSF54189">
    <property type="entry name" value="Ribosomal proteins S24e, L23 and L15e"/>
    <property type="match status" value="1"/>
</dbReference>
<dbReference type="PROSITE" id="PS00050">
    <property type="entry name" value="RIBOSOMAL_L23"/>
    <property type="match status" value="1"/>
</dbReference>
<organism>
    <name type="scientific">Kluyveromyces lactis (strain ATCC 8585 / CBS 2359 / DSM 70799 / NBRC 1267 / NRRL Y-1140 / WM37)</name>
    <name type="common">Yeast</name>
    <name type="synonym">Candida sphaerica</name>
    <dbReference type="NCBI Taxonomy" id="284590"/>
    <lineage>
        <taxon>Eukaryota</taxon>
        <taxon>Fungi</taxon>
        <taxon>Dikarya</taxon>
        <taxon>Ascomycota</taxon>
        <taxon>Saccharomycotina</taxon>
        <taxon>Saccharomycetes</taxon>
        <taxon>Saccharomycetales</taxon>
        <taxon>Saccharomycetaceae</taxon>
        <taxon>Kluyveromyces</taxon>
    </lineage>
</organism>
<protein>
    <recommendedName>
        <fullName evidence="1">Large ribosomal subunit protein uL23</fullName>
    </recommendedName>
    <alternativeName>
        <fullName>60S ribosomal protein L25</fullName>
    </alternativeName>
</protein>
<feature type="chain" id="PRO_0000129478" description="Large ribosomal subunit protein uL23">
    <location>
        <begin position="1"/>
        <end position="142"/>
    </location>
</feature>
<name>RL25_KLULA</name>
<proteinExistence type="evidence at protein level"/>
<accession>P48045</accession>
<keyword id="KW-0002">3D-structure</keyword>
<keyword id="KW-1185">Reference proteome</keyword>
<keyword id="KW-0687">Ribonucleoprotein</keyword>
<keyword id="KW-0689">Ribosomal protein</keyword>
<keyword id="KW-0694">RNA-binding</keyword>
<keyword id="KW-0699">rRNA-binding</keyword>
<gene>
    <name type="primary">RPL25</name>
    <name type="ordered locus">KLLA0E07458g</name>
</gene>
<reference key="1">
    <citation type="journal article" date="1992" name="Yeast">
        <title>Structural and putative regulatory sequences of Kluyveromyces ribosomal protein genes.</title>
        <authorList>
            <person name="Bergkamp-Steffens G.K."/>
            <person name="Hoekstra R."/>
            <person name="Planta R.J."/>
        </authorList>
    </citation>
    <scope>NUCLEOTIDE SEQUENCE [GENOMIC DNA]</scope>
</reference>
<reference key="2">
    <citation type="journal article" date="2004" name="Nature">
        <title>Genome evolution in yeasts.</title>
        <authorList>
            <person name="Dujon B."/>
            <person name="Sherman D."/>
            <person name="Fischer G."/>
            <person name="Durrens P."/>
            <person name="Casaregola S."/>
            <person name="Lafontaine I."/>
            <person name="de Montigny J."/>
            <person name="Marck C."/>
            <person name="Neuveglise C."/>
            <person name="Talla E."/>
            <person name="Goffard N."/>
            <person name="Frangeul L."/>
            <person name="Aigle M."/>
            <person name="Anthouard V."/>
            <person name="Babour A."/>
            <person name="Barbe V."/>
            <person name="Barnay S."/>
            <person name="Blanchin S."/>
            <person name="Beckerich J.-M."/>
            <person name="Beyne E."/>
            <person name="Bleykasten C."/>
            <person name="Boisrame A."/>
            <person name="Boyer J."/>
            <person name="Cattolico L."/>
            <person name="Confanioleri F."/>
            <person name="de Daruvar A."/>
            <person name="Despons L."/>
            <person name="Fabre E."/>
            <person name="Fairhead C."/>
            <person name="Ferry-Dumazet H."/>
            <person name="Groppi A."/>
            <person name="Hantraye F."/>
            <person name="Hennequin C."/>
            <person name="Jauniaux N."/>
            <person name="Joyet P."/>
            <person name="Kachouri R."/>
            <person name="Kerrest A."/>
            <person name="Koszul R."/>
            <person name="Lemaire M."/>
            <person name="Lesur I."/>
            <person name="Ma L."/>
            <person name="Muller H."/>
            <person name="Nicaud J.-M."/>
            <person name="Nikolski M."/>
            <person name="Oztas S."/>
            <person name="Ozier-Kalogeropoulos O."/>
            <person name="Pellenz S."/>
            <person name="Potier S."/>
            <person name="Richard G.-F."/>
            <person name="Straub M.-L."/>
            <person name="Suleau A."/>
            <person name="Swennen D."/>
            <person name="Tekaia F."/>
            <person name="Wesolowski-Louvel M."/>
            <person name="Westhof E."/>
            <person name="Wirth B."/>
            <person name="Zeniou-Meyer M."/>
            <person name="Zivanovic Y."/>
            <person name="Bolotin-Fukuhara M."/>
            <person name="Thierry A."/>
            <person name="Bouchier C."/>
            <person name="Caudron B."/>
            <person name="Scarpelli C."/>
            <person name="Gaillardin C."/>
            <person name="Weissenbach J."/>
            <person name="Wincker P."/>
            <person name="Souciet J.-L."/>
        </authorList>
    </citation>
    <scope>NUCLEOTIDE SEQUENCE [LARGE SCALE GENOMIC DNA]</scope>
    <source>
        <strain>ATCC 8585 / CBS 2359 / DSM 70799 / NBRC 1267 / NRRL Y-1140 / WM37</strain>
    </source>
</reference>